<dbReference type="EC" id="4.2.1.77" evidence="2"/>
<dbReference type="EMBL" id="AE016877">
    <property type="protein sequence ID" value="AAP07892.1"/>
    <property type="molecule type" value="Genomic_DNA"/>
</dbReference>
<dbReference type="RefSeq" id="NP_830691.1">
    <property type="nucleotide sequence ID" value="NC_004722.1"/>
</dbReference>
<dbReference type="RefSeq" id="WP_000868678.1">
    <property type="nucleotide sequence ID" value="NC_004722.1"/>
</dbReference>
<dbReference type="SMR" id="Q81HB1"/>
<dbReference type="STRING" id="226900.BC_0905"/>
<dbReference type="KEGG" id="bce:BC0905"/>
<dbReference type="PATRIC" id="fig|226900.8.peg.850"/>
<dbReference type="HOGENOM" id="CLU_036729_0_0_9"/>
<dbReference type="OrthoDB" id="181267at2"/>
<dbReference type="Proteomes" id="UP000001417">
    <property type="component" value="Chromosome"/>
</dbReference>
<dbReference type="GO" id="GO:0047580">
    <property type="term" value="F:4-hydroxyproline epimerase activity"/>
    <property type="evidence" value="ECO:0000318"/>
    <property type="project" value="GO_Central"/>
</dbReference>
<dbReference type="GO" id="GO:0050346">
    <property type="term" value="F:trans-L-3-hydroxyproline dehydratase activity"/>
    <property type="evidence" value="ECO:0007669"/>
    <property type="project" value="UniProtKB-EC"/>
</dbReference>
<dbReference type="FunFam" id="3.10.310.10:FF:000023">
    <property type="entry name" value="Proline racemase"/>
    <property type="match status" value="1"/>
</dbReference>
<dbReference type="Gene3D" id="3.10.310.10">
    <property type="entry name" value="Diaminopimelate Epimerase, Chain A, domain 1"/>
    <property type="match status" value="2"/>
</dbReference>
<dbReference type="InterPro" id="IPR008794">
    <property type="entry name" value="Pro_racemase_fam"/>
</dbReference>
<dbReference type="PANTHER" id="PTHR33442">
    <property type="entry name" value="TRANS-3-HYDROXY-L-PROLINE DEHYDRATASE"/>
    <property type="match status" value="1"/>
</dbReference>
<dbReference type="PANTHER" id="PTHR33442:SF1">
    <property type="entry name" value="TRANS-3-HYDROXY-L-PROLINE DEHYDRATASE"/>
    <property type="match status" value="1"/>
</dbReference>
<dbReference type="Pfam" id="PF05544">
    <property type="entry name" value="Pro_racemase"/>
    <property type="match status" value="1"/>
</dbReference>
<dbReference type="PIRSF" id="PIRSF029792">
    <property type="entry name" value="Pro_racemase"/>
    <property type="match status" value="1"/>
</dbReference>
<dbReference type="SFLD" id="SFLDS00028">
    <property type="entry name" value="Proline_Racemase"/>
    <property type="match status" value="1"/>
</dbReference>
<dbReference type="SUPFAM" id="SSF54506">
    <property type="entry name" value="Diaminopimelate epimerase-like"/>
    <property type="match status" value="1"/>
</dbReference>
<protein>
    <recommendedName>
        <fullName evidence="3">Trans-3-hydroxy-L-proline dehydratase</fullName>
        <shortName>T3LHyp dehydratase</shortName>
        <shortName evidence="3">t3HypD</shortName>
        <ecNumber evidence="2">4.2.1.77</ecNumber>
    </recommendedName>
    <alternativeName>
        <fullName>Trans-L-3-hydroxyproline dehydratase</fullName>
    </alternativeName>
</protein>
<feature type="chain" id="PRO_0000432267" description="Trans-3-hydroxy-L-proline dehydratase">
    <location>
        <begin position="1"/>
        <end position="334"/>
    </location>
</feature>
<feature type="active site" description="Proton acceptor" evidence="1">
    <location>
        <position position="91"/>
    </location>
</feature>
<feature type="binding site" evidence="1">
    <location>
        <begin position="92"/>
        <end position="93"/>
    </location>
    <ligand>
        <name>substrate</name>
    </ligand>
</feature>
<feature type="binding site" evidence="1">
    <location>
        <position position="250"/>
    </location>
    <ligand>
        <name>substrate</name>
    </ligand>
</feature>
<feature type="binding site" evidence="1">
    <location>
        <begin position="255"/>
        <end position="256"/>
    </location>
    <ligand>
        <name>substrate</name>
    </ligand>
</feature>
<sequence>MKVSKIYTTIDAHVAGEPLRIITGGVPEIKGETQLERRAYCMEHLDYLREILMYEPRGHHGMYGCIITPPASAHADFGVLFMHNEGWSTMCGHGIIAVITVGIETGMFEVTGEKQKFIIDSPAGEVIAYATYSGSEVESVSFENVPSFVYKKDVPIKIDSYEFQVDIAFGGAFYAVVDSKEFGLKVDFKDLSAIQMWGGKIKHYIESKMEVKHPLEEGLKGIYGVIFSDDPKEKDATLRNVTIFADGQVDRSPCGTGTSARIATLFAKDALQKGEIFVHECITDGKFEGEVLSVTAVHTYEAVVPKVTGNAFITGFHQFVVDPRDDLNRGFLLG</sequence>
<organism>
    <name type="scientific">Bacillus cereus (strain ATCC 14579 / DSM 31 / CCUG 7414 / JCM 2152 / NBRC 15305 / NCIMB 9373 / NCTC 2599 / NRRL B-3711)</name>
    <dbReference type="NCBI Taxonomy" id="226900"/>
    <lineage>
        <taxon>Bacteria</taxon>
        <taxon>Bacillati</taxon>
        <taxon>Bacillota</taxon>
        <taxon>Bacilli</taxon>
        <taxon>Bacillales</taxon>
        <taxon>Bacillaceae</taxon>
        <taxon>Bacillus</taxon>
        <taxon>Bacillus cereus group</taxon>
    </lineage>
</organism>
<reference key="1">
    <citation type="journal article" date="2003" name="Nature">
        <title>Genome sequence of Bacillus cereus and comparative analysis with Bacillus anthracis.</title>
        <authorList>
            <person name="Ivanova N."/>
            <person name="Sorokin A."/>
            <person name="Anderson I."/>
            <person name="Galleron N."/>
            <person name="Candelon B."/>
            <person name="Kapatral V."/>
            <person name="Bhattacharyya A."/>
            <person name="Reznik G."/>
            <person name="Mikhailova N."/>
            <person name="Lapidus A."/>
            <person name="Chu L."/>
            <person name="Mazur M."/>
            <person name="Goltsman E."/>
            <person name="Larsen N."/>
            <person name="D'Souza M."/>
            <person name="Walunas T."/>
            <person name="Grechkin Y."/>
            <person name="Pusch G."/>
            <person name="Haselkorn R."/>
            <person name="Fonstein M."/>
            <person name="Ehrlich S.D."/>
            <person name="Overbeek R."/>
            <person name="Kyrpides N.C."/>
        </authorList>
    </citation>
    <scope>NUCLEOTIDE SEQUENCE [LARGE SCALE GENOMIC DNA]</scope>
    <source>
        <strain>ATCC 14579 / DSM 31 / CCUG 7414 / JCM 2152 / NBRC 15305 / NCIMB 9373 / NCTC 2599 / NRRL B-3711</strain>
    </source>
</reference>
<reference key="2">
    <citation type="journal article" date="2014" name="Elife">
        <title>Prediction and characterization of enzymatic activities guided by sequence similarity and genome neighborhood networks.</title>
        <authorList>
            <person name="Zhao S."/>
            <person name="Sakai A."/>
            <person name="Zhang X."/>
            <person name="Vetting M.W."/>
            <person name="Kumar R."/>
            <person name="Hillerich B."/>
            <person name="San Francisco B."/>
            <person name="Solbiati J."/>
            <person name="Steves A."/>
            <person name="Brown S."/>
            <person name="Akiva E."/>
            <person name="Barber A."/>
            <person name="Seidel R.D."/>
            <person name="Babbitt P.C."/>
            <person name="Almo S.C."/>
            <person name="Gerlt J.A."/>
            <person name="Jacobson M.P."/>
        </authorList>
    </citation>
    <scope>FUNCTION</scope>
    <scope>CATALYTIC ACTIVITY</scope>
    <scope>INDUCTION</scope>
    <source>
        <strain>ATCC 14579 / DSM 31 / CCUG 7414 / JCM 2152 / NBRC 15305 / NCIMB 9373 / NCTC 2599 / NRRL B-3711</strain>
    </source>
</reference>
<keyword id="KW-0456">Lyase</keyword>
<keyword id="KW-1185">Reference proteome</keyword>
<evidence type="ECO:0000250" key="1">
    <source>
        <dbReference type="UniProtKB" id="Q4KGU2"/>
    </source>
</evidence>
<evidence type="ECO:0000269" key="2">
    <source>
    </source>
</evidence>
<evidence type="ECO:0000303" key="3">
    <source>
    </source>
</evidence>
<evidence type="ECO:0000305" key="4"/>
<evidence type="ECO:0000305" key="5">
    <source>
    </source>
</evidence>
<evidence type="ECO:0000312" key="6">
    <source>
        <dbReference type="EMBL" id="AAP07892.1"/>
    </source>
</evidence>
<accession>Q81HB1</accession>
<name>T3HPD_BACCR</name>
<gene>
    <name evidence="6" type="ordered locus">BC_0905</name>
</gene>
<proteinExistence type="evidence at protein level"/>
<comment type="function">
    <text evidence="2 5">Catalyzes the dehydration of trans-3-hydroxy-L-proline (t3LHyp) to Delta(1)-pyrroline-2-carboxylate (Pyr2C). Is likely involved in a degradation pathway that converts t3LHyp to L-proline, which allows B.cereus to grow on t3LHyp as a sole carbon source. Displays no proline racemase activity.</text>
</comment>
<comment type="catalytic activity">
    <reaction evidence="2">
        <text>trans-3-hydroxy-L-proline = 1-pyrroline-2-carboxylate + H2O</text>
        <dbReference type="Rhea" id="RHEA:10320"/>
        <dbReference type="ChEBI" id="CHEBI:15377"/>
        <dbReference type="ChEBI" id="CHEBI:39785"/>
        <dbReference type="ChEBI" id="CHEBI:57938"/>
        <dbReference type="EC" id="4.2.1.77"/>
    </reaction>
</comment>
<comment type="induction">
    <text evidence="2">Is up-regulated when the bacterium is grown on t4LHyp or t3LHyp as sole carbon source.</text>
</comment>
<comment type="similarity">
    <text evidence="4">Belongs to the proline racemase family.</text>
</comment>